<name>CPSF1_CAEBR</name>
<evidence type="ECO:0000250" key="1">
    <source>
        <dbReference type="UniProtKB" id="Q9N4C2"/>
    </source>
</evidence>
<evidence type="ECO:0000250" key="2">
    <source>
        <dbReference type="UniProtKB" id="Q9V726"/>
    </source>
</evidence>
<evidence type="ECO:0000255" key="3"/>
<evidence type="ECO:0000256" key="4">
    <source>
        <dbReference type="SAM" id="MobiDB-lite"/>
    </source>
</evidence>
<evidence type="ECO:0000312" key="5">
    <source>
        <dbReference type="EMBL" id="CAP34673.1"/>
    </source>
</evidence>
<sequence length="1454" mass="163390">MYGYLRETDDSTAINYSAYGKFLPGENTGFQLLTIGAKFLRIFRVNPYVLKEPGEDNEEWQQKTKLECMFSCRLLNKCQSVAVARVPQLPDQDSILMTFDDAKLSIVAVNEKERNMQTISLHAFENEYLRDGFTTYFNPPIVRTDPANRCAASLVYGKHIAILPFHENSKRILSYIIPLKQIDPRLDNVADMVFLEGYYEPTILFLYEPLQTTPGRACVRYDTMCIMGVSVNIVDRQFAVVWQTANLPMDCNSLLSIPKPLGGAVVFGSNTIVYLNQAVPPCGIVLNSCYDGFTKFPLKDMKHLKMTLDCSTSVYMEDGRIAVGSREGDLYLLRLVTSSGGATVKSLEFSKVCDTSIAFTLTVCAPGHLFVGSRLGDSQLLEYTLLKVTKESAKKQRLEQQNPSEIELDEDDIELYGGAIEMQQNDDDEQISESLQFRELDRLLNVGPVKSMCFGRPNYMSNDLIDAKRKDPVFDLVTASGHGKNGALCVHQRSMRPEIITSSLLEGAEQLWAVGRKENESHKYLIVSRVRSTLILELGEELVELEEQLFVTNEPTVAAGELLQGALAVQVTSTCIALVTDGQQMQEVHIDSNFPVVQASIVDPYVAVLTQNGRPLLYELAMEPYVHLREVNVNETSFATFSEQISTQLTSVSIYSDASQIMKKNTVDGRDEKPENAAENGHHVAVPKIKKEIPDDDAMLYGEDDDFLYGDAEEDEPMVAAESGESSTRLQNTRKRKRLGHDAIMSSRGGEQSDAIDPTRTYSSITHWLVVAHDNGRITIHSLPDLELVYQIGRFSNVPELLVDMTVEEEEKEKKAKQTAAQEKEKETEKKKDDAKNEEDQVNSEMKKLCEKVVEAQIVGMGINQAHPVLIAIIDEEVVLYEMFASYNPQPGHLGVAFRKLPHLIGLRTSPYVNIDGKRAPFEMEMEHGKRYTLIHPFERISSINNGVMIGGAVPTLLVYGAWGGMQTHQMTIDGSIKAFTPFNNENVLHGFVYMTQQKSELRIARMHPDFDYDMPYPVKKIEVGKTVHNVRYLMNSDIYAVVSSVPKPSNKIWVVMNDDKQEEIHEKDENFVLPAPPKYTLNLFSSQDWAAVPNTEFEFEDMEAVTAMEDVPLKSESRYGGLDTYLALATVNNYGEEVLVRGRIILCEVIEVVPEPGQPTSNRKIKVLYDKEQKGPVTGLCAINGLLLSGMGQKVFIWQFKDNDLMGISFLDMHYYVYQLHSIRTIALALDARESMSLIRFQEENKAMSIASRDDRKCAQAPMASEFLVDGMHIGFLLSDEHGNITLFSYSPEAPESNGGERLTVKAAINIGTNINAFLRVKGHTSLLDSSSPEERENIEQRMNTIFGSLDGSFGYIRPLTEKSYRRLHFLQTFIGSVTPQIAGLHIKGARSSKPSQPIVNGRNARNLIDGDVVEQYLHLSVYDKTDLARRLGVGRYHILDDLMQLRRMAYYY</sequence>
<reference evidence="5" key="1">
    <citation type="journal article" date="2003" name="PLoS Biol.">
        <title>The genome sequence of Caenorhabditis briggsae: a platform for comparative genomics.</title>
        <authorList>
            <person name="Stein L.D."/>
            <person name="Bao Z."/>
            <person name="Blasiar D."/>
            <person name="Blumenthal T."/>
            <person name="Brent M.R."/>
            <person name="Chen N."/>
            <person name="Chinwalla A."/>
            <person name="Clarke L."/>
            <person name="Clee C."/>
            <person name="Coghlan A."/>
            <person name="Coulson A."/>
            <person name="D'Eustachio P."/>
            <person name="Fitch D.H.A."/>
            <person name="Fulton L.A."/>
            <person name="Fulton R.E."/>
            <person name="Griffiths-Jones S."/>
            <person name="Harris T.W."/>
            <person name="Hillier L.W."/>
            <person name="Kamath R."/>
            <person name="Kuwabara P.E."/>
            <person name="Mardis E.R."/>
            <person name="Marra M.A."/>
            <person name="Miner T.L."/>
            <person name="Minx P."/>
            <person name="Mullikin J.C."/>
            <person name="Plumb R.W."/>
            <person name="Rogers J."/>
            <person name="Schein J.E."/>
            <person name="Sohrmann M."/>
            <person name="Spieth J."/>
            <person name="Stajich J.E."/>
            <person name="Wei C."/>
            <person name="Willey D."/>
            <person name="Wilson R.K."/>
            <person name="Durbin R.M."/>
            <person name="Waterston R.H."/>
        </authorList>
    </citation>
    <scope>NUCLEOTIDE SEQUENCE [LARGE SCALE GENOMIC DNA]</scope>
    <source>
        <strain>AF16</strain>
    </source>
</reference>
<dbReference type="EMBL" id="HE600944">
    <property type="protein sequence ID" value="CAP34673.1"/>
    <property type="molecule type" value="Genomic_DNA"/>
</dbReference>
<dbReference type="SMR" id="A8XPU7"/>
<dbReference type="FunCoup" id="A8XPU7">
    <property type="interactions" value="2982"/>
</dbReference>
<dbReference type="STRING" id="6238.A8XPU7"/>
<dbReference type="EnsemblMetazoa" id="CBG16808.1">
    <property type="protein sequence ID" value="CBG16808.1"/>
    <property type="gene ID" value="WBGene00036642"/>
</dbReference>
<dbReference type="KEGG" id="cbr:CBG_16808"/>
<dbReference type="CTD" id="8587113"/>
<dbReference type="WormBase" id="CBG16808">
    <property type="protein sequence ID" value="CBP04005"/>
    <property type="gene ID" value="WBGene00036642"/>
    <property type="gene designation" value="Cbr-cpsf-1"/>
</dbReference>
<dbReference type="eggNOG" id="KOG1896">
    <property type="taxonomic scope" value="Eukaryota"/>
</dbReference>
<dbReference type="HOGENOM" id="CLU_002414_0_0_1"/>
<dbReference type="InParanoid" id="A8XPU7"/>
<dbReference type="OMA" id="PMTKFKL"/>
<dbReference type="Proteomes" id="UP000008549">
    <property type="component" value="Unassembled WGS sequence"/>
</dbReference>
<dbReference type="GO" id="GO:0005847">
    <property type="term" value="C:mRNA cleavage and polyadenylation specificity factor complex"/>
    <property type="evidence" value="ECO:0000318"/>
    <property type="project" value="GO_Central"/>
</dbReference>
<dbReference type="GO" id="GO:0005634">
    <property type="term" value="C:nucleus"/>
    <property type="evidence" value="ECO:0000318"/>
    <property type="project" value="GO_Central"/>
</dbReference>
<dbReference type="GO" id="GO:0003723">
    <property type="term" value="F:RNA binding"/>
    <property type="evidence" value="ECO:0007669"/>
    <property type="project" value="UniProtKB-KW"/>
</dbReference>
<dbReference type="GO" id="GO:0006397">
    <property type="term" value="P:mRNA processing"/>
    <property type="evidence" value="ECO:0007669"/>
    <property type="project" value="UniProtKB-KW"/>
</dbReference>
<dbReference type="FunFam" id="2.130.10.10:FF:001385">
    <property type="entry name" value="Probable cleavage and polyadenylation specificity factor subunit 1"/>
    <property type="match status" value="1"/>
</dbReference>
<dbReference type="FunFam" id="2.130.10.10:FF:002090">
    <property type="entry name" value="Probable cleavage and polyadenylation specificity factor subunit 1"/>
    <property type="match status" value="1"/>
</dbReference>
<dbReference type="Gene3D" id="2.130.10.10">
    <property type="entry name" value="YVTN repeat-like/Quinoprotein amine dehydrogenase"/>
    <property type="match status" value="3"/>
</dbReference>
<dbReference type="InterPro" id="IPR018846">
    <property type="entry name" value="Beta-prop_RSE1/DDB1/CPSF1_1st"/>
</dbReference>
<dbReference type="InterPro" id="IPR004871">
    <property type="entry name" value="Cleavage/polyA-sp_fac_asu_C"/>
</dbReference>
<dbReference type="InterPro" id="IPR050358">
    <property type="entry name" value="RSE1/DDB1/CFT1/CPSF1"/>
</dbReference>
<dbReference type="InterPro" id="IPR015943">
    <property type="entry name" value="WD40/YVTN_repeat-like_dom_sf"/>
</dbReference>
<dbReference type="PANTHER" id="PTHR10644">
    <property type="entry name" value="DNA REPAIR/RNA PROCESSING CPSF FAMILY"/>
    <property type="match status" value="1"/>
</dbReference>
<dbReference type="Pfam" id="PF10433">
    <property type="entry name" value="Beta-prop_RSE1_1st"/>
    <property type="match status" value="1"/>
</dbReference>
<dbReference type="Pfam" id="PF23726">
    <property type="entry name" value="Beta-prop_RSE1_2nd"/>
    <property type="match status" value="1"/>
</dbReference>
<dbReference type="Pfam" id="PF03178">
    <property type="entry name" value="CPSF_A"/>
    <property type="match status" value="1"/>
</dbReference>
<organism>
    <name type="scientific">Caenorhabditis briggsae</name>
    <dbReference type="NCBI Taxonomy" id="6238"/>
    <lineage>
        <taxon>Eukaryota</taxon>
        <taxon>Metazoa</taxon>
        <taxon>Ecdysozoa</taxon>
        <taxon>Nematoda</taxon>
        <taxon>Chromadorea</taxon>
        <taxon>Rhabditida</taxon>
        <taxon>Rhabditina</taxon>
        <taxon>Rhabditomorpha</taxon>
        <taxon>Rhabditoidea</taxon>
        <taxon>Rhabditidae</taxon>
        <taxon>Peloderinae</taxon>
        <taxon>Caenorhabditis</taxon>
    </lineage>
</organism>
<accession>A8XPU7</accession>
<keyword id="KW-0507">mRNA processing</keyword>
<keyword id="KW-0539">Nucleus</keyword>
<keyword id="KW-1185">Reference proteome</keyword>
<keyword id="KW-0694">RNA-binding</keyword>
<gene>
    <name evidence="5" type="primary">cpsf-1</name>
    <name type="ORF">CBG16808</name>
</gene>
<feature type="chain" id="PRO_0000394292" description="Probable cleavage and polyadenylation specificity factor subunit 1">
    <location>
        <begin position="1"/>
        <end position="1454"/>
    </location>
</feature>
<feature type="region of interest" description="Disordered" evidence="4">
    <location>
        <begin position="810"/>
        <end position="843"/>
    </location>
</feature>
<feature type="compositionally biased region" description="Basic and acidic residues" evidence="4">
    <location>
        <begin position="812"/>
        <end position="843"/>
    </location>
</feature>
<proteinExistence type="inferred from homology"/>
<protein>
    <recommendedName>
        <fullName evidence="1">Probable cleavage and polyadenylation specificity factor subunit 1</fullName>
    </recommendedName>
    <alternativeName>
        <fullName evidence="1">Cleavage and polyadenylation specificity factor 160 kDa subunit</fullName>
        <shortName evidence="1">CPSF 160 kDa subunit</shortName>
    </alternativeName>
</protein>
<comment type="function">
    <text evidence="2">CPSF plays a key role in pre-mRNA 3'-end formation, recognizing the AAUAAA signal sequence and interacting with poly(A)polymerase and other factors to bring about cleavage and poly(A) addition. This subunit is involved in the RNA recognition step of the polyadenylation reaction (By similarity).</text>
</comment>
<comment type="subunit">
    <text evidence="2">CPSF is a heterotetramer composed of four distinct subunits 160 (cpsf-1), 100 (cpsf-2), 70 (cpsf-3), and 30 kDa (cpsf-4).</text>
</comment>
<comment type="subcellular location">
    <subcellularLocation>
        <location evidence="2">Nucleus</location>
    </subcellularLocation>
</comment>
<comment type="similarity">
    <text evidence="3">Belongs to the CPSF1 family.</text>
</comment>